<sequence>MTKKYSLGFVGRKAGMSRVFTEDGRSVPVTLIEATPNRIAQIKTVEVDGYSAVQITVGARRAALVNKPAAGHFAKAKVEAGRGLWEFRVEDAQLGDFAVGGEIKADIFEVGQKVDVQGVTKGKGFQGTIKRYNFRMGDATHGNSLSHRAPGSLGQRQTPGRVFPGKKMSGHMGAVQQSTQNLEVVKVDVERGLIAIRGAVPGAAGGDVIVRPASKA</sequence>
<reference key="1">
    <citation type="journal article" date="2002" name="Nature">
        <title>Comparison of the genomes of two Xanthomonas pathogens with differing host specificities.</title>
        <authorList>
            <person name="da Silva A.C.R."/>
            <person name="Ferro J.A."/>
            <person name="Reinach F.C."/>
            <person name="Farah C.S."/>
            <person name="Furlan L.R."/>
            <person name="Quaggio R.B."/>
            <person name="Monteiro-Vitorello C.B."/>
            <person name="Van Sluys M.A."/>
            <person name="Almeida N.F. Jr."/>
            <person name="Alves L.M.C."/>
            <person name="do Amaral A.M."/>
            <person name="Bertolini M.C."/>
            <person name="Camargo L.E.A."/>
            <person name="Camarotte G."/>
            <person name="Cannavan F."/>
            <person name="Cardozo J."/>
            <person name="Chambergo F."/>
            <person name="Ciapina L.P."/>
            <person name="Cicarelli R.M.B."/>
            <person name="Coutinho L.L."/>
            <person name="Cursino-Santos J.R."/>
            <person name="El-Dorry H."/>
            <person name="Faria J.B."/>
            <person name="Ferreira A.J.S."/>
            <person name="Ferreira R.C.C."/>
            <person name="Ferro M.I.T."/>
            <person name="Formighieri E.F."/>
            <person name="Franco M.C."/>
            <person name="Greggio C.C."/>
            <person name="Gruber A."/>
            <person name="Katsuyama A.M."/>
            <person name="Kishi L.T."/>
            <person name="Leite R.P."/>
            <person name="Lemos E.G.M."/>
            <person name="Lemos M.V.F."/>
            <person name="Locali E.C."/>
            <person name="Machado M.A."/>
            <person name="Madeira A.M.B.N."/>
            <person name="Martinez-Rossi N.M."/>
            <person name="Martins E.C."/>
            <person name="Meidanis J."/>
            <person name="Menck C.F.M."/>
            <person name="Miyaki C.Y."/>
            <person name="Moon D.H."/>
            <person name="Moreira L.M."/>
            <person name="Novo M.T.M."/>
            <person name="Okura V.K."/>
            <person name="Oliveira M.C."/>
            <person name="Oliveira V.R."/>
            <person name="Pereira H.A."/>
            <person name="Rossi A."/>
            <person name="Sena J.A.D."/>
            <person name="Silva C."/>
            <person name="de Souza R.F."/>
            <person name="Spinola L.A.F."/>
            <person name="Takita M.A."/>
            <person name="Tamura R.E."/>
            <person name="Teixeira E.C."/>
            <person name="Tezza R.I.D."/>
            <person name="Trindade dos Santos M."/>
            <person name="Truffi D."/>
            <person name="Tsai S.M."/>
            <person name="White F.F."/>
            <person name="Setubal J.C."/>
            <person name="Kitajima J.P."/>
        </authorList>
    </citation>
    <scope>NUCLEOTIDE SEQUENCE [LARGE SCALE GENOMIC DNA]</scope>
    <source>
        <strain>ATCC 33913 / DSM 3586 / NCPPB 528 / LMG 568 / P 25</strain>
    </source>
</reference>
<comment type="function">
    <text evidence="1">One of the primary rRNA binding proteins, it binds directly near the 3'-end of the 23S rRNA, where it nucleates assembly of the 50S subunit.</text>
</comment>
<comment type="subunit">
    <text evidence="1">Part of the 50S ribosomal subunit. Forms a cluster with proteins L14 and L19.</text>
</comment>
<comment type="PTM">
    <text evidence="1">Methylated by PrmB.</text>
</comment>
<comment type="similarity">
    <text evidence="1">Belongs to the universal ribosomal protein uL3 family.</text>
</comment>
<gene>
    <name evidence="1" type="primary">rplC</name>
    <name type="ordered locus">XCC0895</name>
</gene>
<evidence type="ECO:0000255" key="1">
    <source>
        <dbReference type="HAMAP-Rule" id="MF_01325"/>
    </source>
</evidence>
<evidence type="ECO:0000305" key="2"/>
<proteinExistence type="inferred from homology"/>
<dbReference type="EMBL" id="AE008922">
    <property type="protein sequence ID" value="AAM40205.1"/>
    <property type="molecule type" value="Genomic_DNA"/>
</dbReference>
<dbReference type="RefSeq" id="NP_636281.1">
    <property type="nucleotide sequence ID" value="NC_003902.1"/>
</dbReference>
<dbReference type="RefSeq" id="WP_011036123.1">
    <property type="nucleotide sequence ID" value="NC_003902.1"/>
</dbReference>
<dbReference type="SMR" id="Q8PC49"/>
<dbReference type="STRING" id="190485.XCC0895"/>
<dbReference type="EnsemblBacteria" id="AAM40205">
    <property type="protein sequence ID" value="AAM40205"/>
    <property type="gene ID" value="XCC0895"/>
</dbReference>
<dbReference type="GeneID" id="97210504"/>
<dbReference type="KEGG" id="xcc:XCC0895"/>
<dbReference type="PATRIC" id="fig|190485.4.peg.967"/>
<dbReference type="eggNOG" id="COG0087">
    <property type="taxonomic scope" value="Bacteria"/>
</dbReference>
<dbReference type="HOGENOM" id="CLU_044142_4_1_6"/>
<dbReference type="OrthoDB" id="9806135at2"/>
<dbReference type="Proteomes" id="UP000001010">
    <property type="component" value="Chromosome"/>
</dbReference>
<dbReference type="GO" id="GO:0022625">
    <property type="term" value="C:cytosolic large ribosomal subunit"/>
    <property type="evidence" value="ECO:0000318"/>
    <property type="project" value="GO_Central"/>
</dbReference>
<dbReference type="GO" id="GO:0019843">
    <property type="term" value="F:rRNA binding"/>
    <property type="evidence" value="ECO:0007669"/>
    <property type="project" value="UniProtKB-UniRule"/>
</dbReference>
<dbReference type="GO" id="GO:0003735">
    <property type="term" value="F:structural constituent of ribosome"/>
    <property type="evidence" value="ECO:0000318"/>
    <property type="project" value="GO_Central"/>
</dbReference>
<dbReference type="GO" id="GO:0006412">
    <property type="term" value="P:translation"/>
    <property type="evidence" value="ECO:0007669"/>
    <property type="project" value="UniProtKB-UniRule"/>
</dbReference>
<dbReference type="FunFam" id="2.40.30.10:FF:000004">
    <property type="entry name" value="50S ribosomal protein L3"/>
    <property type="match status" value="1"/>
</dbReference>
<dbReference type="FunFam" id="3.30.160.810:FF:000001">
    <property type="entry name" value="50S ribosomal protein L3"/>
    <property type="match status" value="1"/>
</dbReference>
<dbReference type="Gene3D" id="3.30.160.810">
    <property type="match status" value="1"/>
</dbReference>
<dbReference type="Gene3D" id="2.40.30.10">
    <property type="entry name" value="Translation factors"/>
    <property type="match status" value="1"/>
</dbReference>
<dbReference type="HAMAP" id="MF_01325_B">
    <property type="entry name" value="Ribosomal_uL3_B"/>
    <property type="match status" value="1"/>
</dbReference>
<dbReference type="InterPro" id="IPR000597">
    <property type="entry name" value="Ribosomal_uL3"/>
</dbReference>
<dbReference type="InterPro" id="IPR019927">
    <property type="entry name" value="Ribosomal_uL3_bac/org-type"/>
</dbReference>
<dbReference type="InterPro" id="IPR019926">
    <property type="entry name" value="Ribosomal_uL3_CS"/>
</dbReference>
<dbReference type="InterPro" id="IPR009000">
    <property type="entry name" value="Transl_B-barrel_sf"/>
</dbReference>
<dbReference type="NCBIfam" id="TIGR03625">
    <property type="entry name" value="L3_bact"/>
    <property type="match status" value="1"/>
</dbReference>
<dbReference type="PANTHER" id="PTHR11229">
    <property type="entry name" value="50S RIBOSOMAL PROTEIN L3"/>
    <property type="match status" value="1"/>
</dbReference>
<dbReference type="PANTHER" id="PTHR11229:SF16">
    <property type="entry name" value="LARGE RIBOSOMAL SUBUNIT PROTEIN UL3C"/>
    <property type="match status" value="1"/>
</dbReference>
<dbReference type="Pfam" id="PF00297">
    <property type="entry name" value="Ribosomal_L3"/>
    <property type="match status" value="1"/>
</dbReference>
<dbReference type="SUPFAM" id="SSF50447">
    <property type="entry name" value="Translation proteins"/>
    <property type="match status" value="1"/>
</dbReference>
<dbReference type="PROSITE" id="PS00474">
    <property type="entry name" value="RIBOSOMAL_L3"/>
    <property type="match status" value="1"/>
</dbReference>
<accession>Q8PC49</accession>
<protein>
    <recommendedName>
        <fullName evidence="1">Large ribosomal subunit protein uL3</fullName>
    </recommendedName>
    <alternativeName>
        <fullName evidence="2">50S ribosomal protein L3</fullName>
    </alternativeName>
</protein>
<organism>
    <name type="scientific">Xanthomonas campestris pv. campestris (strain ATCC 33913 / DSM 3586 / NCPPB 528 / LMG 568 / P 25)</name>
    <dbReference type="NCBI Taxonomy" id="190485"/>
    <lineage>
        <taxon>Bacteria</taxon>
        <taxon>Pseudomonadati</taxon>
        <taxon>Pseudomonadota</taxon>
        <taxon>Gammaproteobacteria</taxon>
        <taxon>Lysobacterales</taxon>
        <taxon>Lysobacteraceae</taxon>
        <taxon>Xanthomonas</taxon>
    </lineage>
</organism>
<feature type="chain" id="PRO_0000077193" description="Large ribosomal subunit protein uL3">
    <location>
        <begin position="1"/>
        <end position="216"/>
    </location>
</feature>
<feature type="modified residue" description="N5-methylglutamine" evidence="1">
    <location>
        <position position="157"/>
    </location>
</feature>
<name>RL3_XANCP</name>
<keyword id="KW-0488">Methylation</keyword>
<keyword id="KW-1185">Reference proteome</keyword>
<keyword id="KW-0687">Ribonucleoprotein</keyword>
<keyword id="KW-0689">Ribosomal protein</keyword>
<keyword id="KW-0694">RNA-binding</keyword>
<keyword id="KW-0699">rRNA-binding</keyword>